<organism>
    <name type="scientific">Colwellia psychrerythraea (strain 34H / ATCC BAA-681)</name>
    <name type="common">Vibrio psychroerythus</name>
    <dbReference type="NCBI Taxonomy" id="167879"/>
    <lineage>
        <taxon>Bacteria</taxon>
        <taxon>Pseudomonadati</taxon>
        <taxon>Pseudomonadota</taxon>
        <taxon>Gammaproteobacteria</taxon>
        <taxon>Alteromonadales</taxon>
        <taxon>Colwelliaceae</taxon>
        <taxon>Colwellia</taxon>
    </lineage>
</organism>
<gene>
    <name evidence="1" type="primary">truB</name>
    <name type="ordered locus">CPS_2205</name>
</gene>
<accession>Q482T7</accession>
<feature type="chain" id="PRO_0000229350" description="tRNA pseudouridine synthase B">
    <location>
        <begin position="1"/>
        <end position="318"/>
    </location>
</feature>
<feature type="active site" description="Nucleophile" evidence="1">
    <location>
        <position position="47"/>
    </location>
</feature>
<protein>
    <recommendedName>
        <fullName evidence="1">tRNA pseudouridine synthase B</fullName>
        <ecNumber evidence="1">5.4.99.25</ecNumber>
    </recommendedName>
    <alternativeName>
        <fullName evidence="1">tRNA pseudouridine(55) synthase</fullName>
        <shortName evidence="1">Psi55 synthase</shortName>
    </alternativeName>
    <alternativeName>
        <fullName evidence="1">tRNA pseudouridylate synthase</fullName>
    </alternativeName>
    <alternativeName>
        <fullName evidence="1">tRNA-uridine isomerase</fullName>
    </alternativeName>
</protein>
<reference key="1">
    <citation type="journal article" date="2005" name="Proc. Natl. Acad. Sci. U.S.A.">
        <title>The psychrophilic lifestyle as revealed by the genome sequence of Colwellia psychrerythraea 34H through genomic and proteomic analyses.</title>
        <authorList>
            <person name="Methe B.A."/>
            <person name="Nelson K.E."/>
            <person name="Deming J.W."/>
            <person name="Momen B."/>
            <person name="Melamud E."/>
            <person name="Zhang X."/>
            <person name="Moult J."/>
            <person name="Madupu R."/>
            <person name="Nelson W.C."/>
            <person name="Dodson R.J."/>
            <person name="Brinkac L.M."/>
            <person name="Daugherty S.C."/>
            <person name="Durkin A.S."/>
            <person name="DeBoy R.T."/>
            <person name="Kolonay J.F."/>
            <person name="Sullivan S.A."/>
            <person name="Zhou L."/>
            <person name="Davidsen T.M."/>
            <person name="Wu M."/>
            <person name="Huston A.L."/>
            <person name="Lewis M."/>
            <person name="Weaver B."/>
            <person name="Weidman J.F."/>
            <person name="Khouri H."/>
            <person name="Utterback T.R."/>
            <person name="Feldblyum T.V."/>
            <person name="Fraser C.M."/>
        </authorList>
    </citation>
    <scope>NUCLEOTIDE SEQUENCE [LARGE SCALE GENOMIC DNA]</scope>
    <source>
        <strain>34H / ATCC BAA-681</strain>
    </source>
</reference>
<proteinExistence type="inferred from homology"/>
<dbReference type="EC" id="5.4.99.25" evidence="1"/>
<dbReference type="EMBL" id="CP000083">
    <property type="protein sequence ID" value="AAZ26122.1"/>
    <property type="molecule type" value="Genomic_DNA"/>
</dbReference>
<dbReference type="RefSeq" id="WP_011043024.1">
    <property type="nucleotide sequence ID" value="NC_003910.7"/>
</dbReference>
<dbReference type="SMR" id="Q482T7"/>
<dbReference type="STRING" id="167879.CPS_2205"/>
<dbReference type="KEGG" id="cps:CPS_2205"/>
<dbReference type="eggNOG" id="COG0130">
    <property type="taxonomic scope" value="Bacteria"/>
</dbReference>
<dbReference type="HOGENOM" id="CLU_032087_0_3_6"/>
<dbReference type="Proteomes" id="UP000000547">
    <property type="component" value="Chromosome"/>
</dbReference>
<dbReference type="GO" id="GO:0003723">
    <property type="term" value="F:RNA binding"/>
    <property type="evidence" value="ECO:0007669"/>
    <property type="project" value="InterPro"/>
</dbReference>
<dbReference type="GO" id="GO:0160148">
    <property type="term" value="F:tRNA pseudouridine(55) synthase activity"/>
    <property type="evidence" value="ECO:0007669"/>
    <property type="project" value="UniProtKB-EC"/>
</dbReference>
<dbReference type="GO" id="GO:1990481">
    <property type="term" value="P:mRNA pseudouridine synthesis"/>
    <property type="evidence" value="ECO:0007669"/>
    <property type="project" value="TreeGrafter"/>
</dbReference>
<dbReference type="GO" id="GO:0031119">
    <property type="term" value="P:tRNA pseudouridine synthesis"/>
    <property type="evidence" value="ECO:0007669"/>
    <property type="project" value="UniProtKB-UniRule"/>
</dbReference>
<dbReference type="CDD" id="cd02573">
    <property type="entry name" value="PseudoU_synth_EcTruB"/>
    <property type="match status" value="1"/>
</dbReference>
<dbReference type="CDD" id="cd21152">
    <property type="entry name" value="PUA_TruB_bacterial"/>
    <property type="match status" value="1"/>
</dbReference>
<dbReference type="FunFam" id="3.30.2350.10:FF:000003">
    <property type="entry name" value="tRNA pseudouridine synthase B"/>
    <property type="match status" value="1"/>
</dbReference>
<dbReference type="Gene3D" id="3.30.2350.10">
    <property type="entry name" value="Pseudouridine synthase"/>
    <property type="match status" value="1"/>
</dbReference>
<dbReference type="Gene3D" id="2.30.130.10">
    <property type="entry name" value="PUA domain"/>
    <property type="match status" value="1"/>
</dbReference>
<dbReference type="HAMAP" id="MF_01080">
    <property type="entry name" value="TruB_bact"/>
    <property type="match status" value="1"/>
</dbReference>
<dbReference type="InterPro" id="IPR020103">
    <property type="entry name" value="PsdUridine_synth_cat_dom_sf"/>
</dbReference>
<dbReference type="InterPro" id="IPR002501">
    <property type="entry name" value="PsdUridine_synth_N"/>
</dbReference>
<dbReference type="InterPro" id="IPR015947">
    <property type="entry name" value="PUA-like_sf"/>
</dbReference>
<dbReference type="InterPro" id="IPR036974">
    <property type="entry name" value="PUA_sf"/>
</dbReference>
<dbReference type="InterPro" id="IPR014780">
    <property type="entry name" value="tRNA_psdUridine_synth_TruB"/>
</dbReference>
<dbReference type="InterPro" id="IPR015240">
    <property type="entry name" value="tRNA_sdUridine_synth_fam1_C"/>
</dbReference>
<dbReference type="InterPro" id="IPR032819">
    <property type="entry name" value="TruB_C"/>
</dbReference>
<dbReference type="NCBIfam" id="TIGR00431">
    <property type="entry name" value="TruB"/>
    <property type="match status" value="1"/>
</dbReference>
<dbReference type="PANTHER" id="PTHR13767:SF2">
    <property type="entry name" value="PSEUDOURIDYLATE SYNTHASE TRUB1"/>
    <property type="match status" value="1"/>
</dbReference>
<dbReference type="PANTHER" id="PTHR13767">
    <property type="entry name" value="TRNA-PSEUDOURIDINE SYNTHASE"/>
    <property type="match status" value="1"/>
</dbReference>
<dbReference type="Pfam" id="PF09157">
    <property type="entry name" value="TruB-C_2"/>
    <property type="match status" value="1"/>
</dbReference>
<dbReference type="Pfam" id="PF16198">
    <property type="entry name" value="TruB_C_2"/>
    <property type="match status" value="1"/>
</dbReference>
<dbReference type="Pfam" id="PF01509">
    <property type="entry name" value="TruB_N"/>
    <property type="match status" value="1"/>
</dbReference>
<dbReference type="SUPFAM" id="SSF55120">
    <property type="entry name" value="Pseudouridine synthase"/>
    <property type="match status" value="1"/>
</dbReference>
<dbReference type="SUPFAM" id="SSF88697">
    <property type="entry name" value="PUA domain-like"/>
    <property type="match status" value="1"/>
</dbReference>
<keyword id="KW-0413">Isomerase</keyword>
<keyword id="KW-0819">tRNA processing</keyword>
<evidence type="ECO:0000255" key="1">
    <source>
        <dbReference type="HAMAP-Rule" id="MF_01080"/>
    </source>
</evidence>
<comment type="function">
    <text evidence="1">Responsible for synthesis of pseudouridine from uracil-55 in the psi GC loop of transfer RNAs.</text>
</comment>
<comment type="catalytic activity">
    <reaction evidence="1">
        <text>uridine(55) in tRNA = pseudouridine(55) in tRNA</text>
        <dbReference type="Rhea" id="RHEA:42532"/>
        <dbReference type="Rhea" id="RHEA-COMP:10101"/>
        <dbReference type="Rhea" id="RHEA-COMP:10102"/>
        <dbReference type="ChEBI" id="CHEBI:65314"/>
        <dbReference type="ChEBI" id="CHEBI:65315"/>
        <dbReference type="EC" id="5.4.99.25"/>
    </reaction>
</comment>
<comment type="similarity">
    <text evidence="1">Belongs to the pseudouridine synthase TruB family. Type 1 subfamily.</text>
</comment>
<sequence length="318" mass="34907">MAKRRKGRQVNGVLLLDKPHGLSSNHALQTVKRIYFAQKAGHTGALDPLATGMLPICLGEGTKFSQYLLDTDKTYQVTAKLGIRTTTSDAGGEVVSEKTVDVSSEQLAKALDSFRGTTKQVPSMYSALKHQGQPLYKYAREGIEVPREARDITVFNLELLRFEHDEVELNIHVSKGTYIRTIVDDLGELLGCGAHVAHLRRSAVGNYPVEKMITLPELEALLEQANADEITPSDVLDPLLLPMNSAVDGMHCVYVDDMSANFLRHGNPVQAYNQPEAGSVQVYLGEDENDADAEFIGVGFINDDGLVAPKRIVVLEQY</sequence>
<name>TRUB_COLP3</name>